<sequence length="175" mass="20467">MEKFTDLNYTLSVITLMNSTLHTILEDPGMAYFPYIAYVLTVLFTLHKASIPTMKIALKTSKCSYKVVKYCIVTIFNTLLKLAGYKEQITTKDEIEKQMDRVVKEMRRQLEMIDRLTTREIEQVELLKRIHDKLVMQSTGEIDMTKEINQKNMKTLEEWESGRNPYEPKEVTAAM</sequence>
<accession>Q6QT02</accession>
<evidence type="ECO:0000255" key="1">
    <source>
        <dbReference type="HAMAP-Rule" id="MF_04091"/>
    </source>
</evidence>
<name>NSP4_ROT18</name>
<reference key="1">
    <citation type="submission" date="2004-01" db="EMBL/GenBank/DDBJ databases">
        <title>Formation of tubular reticulate structures,augmentation and potentiation of diarrhea induction by rotavirus nonstructural protein NSP4 mediated by an amphipathic alphahelix.</title>
        <authorList>
            <person name="Jagannath M.R."/>
            <person name="Kesavulu M.M."/>
            <person name="Deepa R."/>
            <person name="Suguna K."/>
            <person name="Rao D.C."/>
        </authorList>
    </citation>
    <scope>NUCLEOTIDE SEQUENCE [GENOMIC RNA]</scope>
</reference>
<comment type="function">
    <text evidence="1">Plays an essential role in the virus replication cycle by acting as a viroporin. Creates a pore in the host endoplasmic reticulum and as a consequence releases Ca(2+) in the cytoplasm of infected cell. In turn, high levels of cytoplasmic calcium trigger membrane trafficking and transport of viral ER-associated proteins to viroplasms, sites of viral genome replication and immature particle assembly.</text>
</comment>
<comment type="function">
    <text evidence="1">The secreted form acts as an enterotoxin that causes phospholipase C-dependent elevation of the intracellular calcium concentration in host intestinal mucosa cells. Increased concentration of intracellular calcium disrupts the cytoskeleton and the tight junctions, raising the paracellular permeability. Potentiates chloride ion secretion through a calcium ion-dependent signaling pathway, inducing age-dependent diarrhea. To perform this enterotoxigenic role in vivo, NSP4 is released from infected enterocytes in a soluble form capable of diffusing within the intestinal lumen and interacting with host plasma membrane receptors on neighboring epithelial cells such as integrins ITGA1/ITGB1 and ITGA2/ITGB1.</text>
</comment>
<comment type="subunit">
    <text evidence="1">Homotetramer. Interacts with the immature particle in the viroplasm. Interacts with host CAV1, early and late in infection. Interacts with host integrin ITGA1/ITGB1 heterodimer. Interacts with host integrin ITGA2/ITGB1 heterodimer. Interaction with microtubules blocks trafficking to the Golgi apparatus.</text>
</comment>
<comment type="subcellular location">
    <subcellularLocation>
        <location evidence="1">Host rough endoplasmic reticulum membrane</location>
        <topology evidence="1">Single-pass type III membrane protein</topology>
    </subcellularLocation>
    <subcellularLocation>
        <location evidence="1">Host membrane</location>
        <location evidence="1">Host caveola</location>
        <topology evidence="1">Single-pass type III membrane protein</topology>
    </subcellularLocation>
    <subcellularLocation>
        <location evidence="1">Secreted</location>
    </subcellularLocation>
    <text evidence="1">NSP4 also localizes in vesicular structures which contain autophagosomal markers and associate with viroplasms in virus-infected cells. Additionally, a soluble form of glycosylated NSP4 is secreted despite retention of its transmembrane domain.</text>
</comment>
<comment type="domain">
    <text evidence="1">Binds 1 calcium ion per tetramer.</text>
</comment>
<comment type="PTM">
    <text evidence="1">The N-glycosyl content is primarily Man(9)GlcNAc, with a small amount of Man(8)GlcNAc.</text>
</comment>
<comment type="similarity">
    <text evidence="1">Belongs to the rotavirus NSP4 family.</text>
</comment>
<protein>
    <recommendedName>
        <fullName evidence="1">Non-structural glycoprotein 4</fullName>
        <shortName evidence="1">NSP4</shortName>
    </recommendedName>
    <alternativeName>
        <fullName evidence="1">NCVP5</fullName>
    </alternativeName>
    <alternativeName>
        <fullName evidence="1">NS28</fullName>
    </alternativeName>
</protein>
<dbReference type="EMBL" id="AY527226">
    <property type="protein sequence ID" value="AAS20320.1"/>
    <property type="molecule type" value="Genomic_RNA"/>
</dbReference>
<dbReference type="SMR" id="Q6QT02"/>
<dbReference type="GO" id="GO:0005576">
    <property type="term" value="C:extracellular region"/>
    <property type="evidence" value="ECO:0007669"/>
    <property type="project" value="UniProtKB-SubCell"/>
</dbReference>
<dbReference type="GO" id="GO:0044155">
    <property type="term" value="C:host caveola"/>
    <property type="evidence" value="ECO:0007669"/>
    <property type="project" value="UniProtKB-SubCell"/>
</dbReference>
<dbReference type="GO" id="GO:0044169">
    <property type="term" value="C:host cell rough endoplasmic reticulum membrane"/>
    <property type="evidence" value="ECO:0007669"/>
    <property type="project" value="UniProtKB-SubCell"/>
</dbReference>
<dbReference type="GO" id="GO:0016020">
    <property type="term" value="C:membrane"/>
    <property type="evidence" value="ECO:0007669"/>
    <property type="project" value="UniProtKB-UniRule"/>
</dbReference>
<dbReference type="GO" id="GO:0015267">
    <property type="term" value="F:channel activity"/>
    <property type="evidence" value="ECO:0007669"/>
    <property type="project" value="UniProtKB-KW"/>
</dbReference>
<dbReference type="GO" id="GO:0046872">
    <property type="term" value="F:metal ion binding"/>
    <property type="evidence" value="ECO:0007669"/>
    <property type="project" value="UniProtKB-UniRule"/>
</dbReference>
<dbReference type="GO" id="GO:0090729">
    <property type="term" value="F:toxin activity"/>
    <property type="evidence" value="ECO:0007669"/>
    <property type="project" value="UniProtKB-UniRule"/>
</dbReference>
<dbReference type="GO" id="GO:0034220">
    <property type="term" value="P:monoatomic ion transmembrane transport"/>
    <property type="evidence" value="ECO:0007669"/>
    <property type="project" value="UniProtKB-KW"/>
</dbReference>
<dbReference type="GO" id="GO:0039520">
    <property type="term" value="P:symbiont-mediated activation of host autophagy"/>
    <property type="evidence" value="ECO:0007669"/>
    <property type="project" value="UniProtKB-KW"/>
</dbReference>
<dbReference type="GO" id="GO:0016032">
    <property type="term" value="P:viral process"/>
    <property type="evidence" value="ECO:0007669"/>
    <property type="project" value="UniProtKB-UniRule"/>
</dbReference>
<dbReference type="Gene3D" id="1.20.5.430">
    <property type="match status" value="1"/>
</dbReference>
<dbReference type="HAMAP" id="MF_04091">
    <property type="entry name" value="ROTA_NSP4"/>
    <property type="match status" value="1"/>
</dbReference>
<dbReference type="InterPro" id="IPR002107">
    <property type="entry name" value="Rotavirus_NSP4"/>
</dbReference>
<dbReference type="Pfam" id="PF01452">
    <property type="entry name" value="Rota_NSP4"/>
    <property type="match status" value="1"/>
</dbReference>
<dbReference type="SUPFAM" id="SSF58030">
    <property type="entry name" value="Rotavirus nonstructural proteins"/>
    <property type="match status" value="1"/>
</dbReference>
<organismHost>
    <name type="scientific">Bos taurus</name>
    <name type="common">Bovine</name>
    <dbReference type="NCBI Taxonomy" id="9913"/>
</organismHost>
<proteinExistence type="inferred from homology"/>
<feature type="chain" id="PRO_0000369461" description="Non-structural glycoprotein 4">
    <location>
        <begin position="1"/>
        <end position="175"/>
    </location>
</feature>
<feature type="topological domain" description="Lumenal" evidence="1">
    <location>
        <begin position="1"/>
        <end position="28"/>
    </location>
</feature>
<feature type="transmembrane region" description="Helical; Signal-anchor for type III membrane protein" evidence="1">
    <location>
        <begin position="29"/>
        <end position="51"/>
    </location>
</feature>
<feature type="topological domain" description="Cytoplasmic" evidence="1">
    <location>
        <begin position="52"/>
        <end position="175"/>
    </location>
</feature>
<feature type="binding site" evidence="1">
    <location>
        <position position="120"/>
    </location>
    <ligand>
        <name>Ca(2+)</name>
        <dbReference type="ChEBI" id="CHEBI:29108"/>
    </ligand>
</feature>
<feature type="binding site" evidence="1">
    <location>
        <position position="123"/>
    </location>
    <ligand>
        <name>Ca(2+)</name>
        <dbReference type="ChEBI" id="CHEBI:29108"/>
    </ligand>
</feature>
<feature type="glycosylation site" description="N-linked (GlcNAc...) asparagine; by host" evidence="1">
    <location>
        <position position="8"/>
    </location>
</feature>
<feature type="glycosylation site" description="N-linked (GlcNAc...) asparagine; by host" evidence="1">
    <location>
        <position position="18"/>
    </location>
</feature>
<organism>
    <name type="scientific">Rotavirus A (isolate RVA/Cow/India/Hg18/2000/G15P[21])</name>
    <name type="common">RV-A</name>
    <dbReference type="NCBI Taxonomy" id="141270"/>
    <lineage>
        <taxon>Viruses</taxon>
        <taxon>Riboviria</taxon>
        <taxon>Orthornavirae</taxon>
        <taxon>Duplornaviricota</taxon>
        <taxon>Resentoviricetes</taxon>
        <taxon>Reovirales</taxon>
        <taxon>Sedoreoviridae</taxon>
        <taxon>Rotavirus</taxon>
        <taxon>Rotavirus A</taxon>
    </lineage>
</organism>
<keyword id="KW-1072">Activation of host autophagy by virus</keyword>
<keyword id="KW-0106">Calcium</keyword>
<keyword id="KW-0260">Enterotoxin</keyword>
<keyword id="KW-0325">Glycoprotein</keyword>
<keyword id="KW-1038">Host endoplasmic reticulum</keyword>
<keyword id="KW-1043">Host membrane</keyword>
<keyword id="KW-0945">Host-virus interaction</keyword>
<keyword id="KW-0407">Ion channel</keyword>
<keyword id="KW-0406">Ion transport</keyword>
<keyword id="KW-0472">Membrane</keyword>
<keyword id="KW-0479">Metal-binding</keyword>
<keyword id="KW-0964">Secreted</keyword>
<keyword id="KW-0735">Signal-anchor</keyword>
<keyword id="KW-0800">Toxin</keyword>
<keyword id="KW-0812">Transmembrane</keyword>
<keyword id="KW-1133">Transmembrane helix</keyword>
<keyword id="KW-0813">Transport</keyword>
<keyword id="KW-1182">Viral ion channel</keyword>
<keyword id="KW-0843">Virulence</keyword>